<name>CATA_PENJA</name>
<evidence type="ECO:0000250" key="1">
    <source>
        <dbReference type="UniProtKB" id="P04040"/>
    </source>
</evidence>
<evidence type="ECO:0000250" key="2">
    <source>
        <dbReference type="UniProtKB" id="P15202"/>
    </source>
</evidence>
<evidence type="ECO:0000255" key="3">
    <source>
        <dbReference type="PROSITE-ProRule" id="PRU10013"/>
    </source>
</evidence>
<evidence type="ECO:0000269" key="4">
    <source>
    </source>
</evidence>
<evidence type="ECO:0000305" key="5"/>
<sequence length="670" mass="70260">AAAQRRQNDSSVFLAIMVAAAVESESSLTDGDAGALLLQDISEWDEVFRFDRLEAVERAAHAAAAAAFGAFVARGDWTASAAAAFQAAGKQIAFMAAFSTVAGAKGSATVRDADAFAAKFASAAALQELVGNNSPISFFIFDLLFAAILFASKAKAANQAAFAAAAELAAESLFVRLPSLHQVSFFALAGFAAVAAHRHMNGYGSHTFKLVAKDGSVYCSKFWYKADQGQAAEVWKDAEEVAAEDVDYFRDLNFQAEAAGRYPLWELASQVMTFSDFEIDPFNENIPTKVVPRESVPLIVDAELLLNRNPLNMFAEVEQVFMDVAAASKGADEVEDPLIQRQFAYIDTHLSELTASYGIPVCRPYATVLNDQEDGARYDDVQDVLVIAPNAFSASAVEVQIPAAAAFNLAAARVAAAGDVRVNAVVEADQRKQSRQFWASDVNAQKKRLVDAFRMEVASAVSASIQVDVTVEFSFVAAAAAARIAAAVGSAAAGALANRRQIKVIASLAVLAKADAKVRQKNALESSSQAVAVDAKAAAQDIVDSSDAANVVTVAREFAVLPQTAAADAAEFVAAASAKAFSSFPAMEVISVAAAAGAVAEPARASLDLNMAMFFSRIVASRGAAANAIAALVKASRDGVFVAAVLAKAAANNRAAEAIFKFEVRQAVDA</sequence>
<organism>
    <name type="scientific">Penicillium janthinellum</name>
    <name type="common">Penicillium vitale</name>
    <dbReference type="NCBI Taxonomy" id="5079"/>
    <lineage>
        <taxon>Eukaryota</taxon>
        <taxon>Fungi</taxon>
        <taxon>Dikarya</taxon>
        <taxon>Ascomycota</taxon>
        <taxon>Pezizomycotina</taxon>
        <taxon>Eurotiomycetes</taxon>
        <taxon>Eurotiomycetidae</taxon>
        <taxon>Eurotiales</taxon>
        <taxon>Aspergillaceae</taxon>
        <taxon>Penicillium</taxon>
    </lineage>
</organism>
<proteinExistence type="evidence at protein level"/>
<dbReference type="EC" id="1.11.1.6" evidence="3"/>
<dbReference type="PIR" id="A25001">
    <property type="entry name" value="A25001"/>
</dbReference>
<dbReference type="PDB" id="4CAT">
    <property type="method" value="X-ray"/>
    <property type="resolution" value="3.00 A"/>
    <property type="chains" value="A/B=-"/>
</dbReference>
<dbReference type="PDBsum" id="4CAT"/>
<dbReference type="SMR" id="P11934"/>
<dbReference type="GO" id="GO:0005829">
    <property type="term" value="C:cytosol"/>
    <property type="evidence" value="ECO:0007669"/>
    <property type="project" value="TreeGrafter"/>
</dbReference>
<dbReference type="GO" id="GO:0005782">
    <property type="term" value="C:peroxisomal matrix"/>
    <property type="evidence" value="ECO:0007669"/>
    <property type="project" value="UniProtKB-SubCell"/>
</dbReference>
<dbReference type="GO" id="GO:0004096">
    <property type="term" value="F:catalase activity"/>
    <property type="evidence" value="ECO:0007669"/>
    <property type="project" value="UniProtKB-EC"/>
</dbReference>
<dbReference type="GO" id="GO:0020037">
    <property type="term" value="F:heme binding"/>
    <property type="evidence" value="ECO:0007669"/>
    <property type="project" value="InterPro"/>
</dbReference>
<dbReference type="GO" id="GO:0046872">
    <property type="term" value="F:metal ion binding"/>
    <property type="evidence" value="ECO:0007669"/>
    <property type="project" value="UniProtKB-KW"/>
</dbReference>
<dbReference type="GO" id="GO:0042744">
    <property type="term" value="P:hydrogen peroxide catabolic process"/>
    <property type="evidence" value="ECO:0007669"/>
    <property type="project" value="UniProtKB-KW"/>
</dbReference>
<dbReference type="GO" id="GO:0006979">
    <property type="term" value="P:response to oxidative stress"/>
    <property type="evidence" value="ECO:0007669"/>
    <property type="project" value="InterPro"/>
</dbReference>
<dbReference type="Gene3D" id="1.20.1370.20">
    <property type="match status" value="1"/>
</dbReference>
<dbReference type="Gene3D" id="2.40.180.10">
    <property type="entry name" value="Catalase core domain"/>
    <property type="match status" value="1"/>
</dbReference>
<dbReference type="InterPro" id="IPR018028">
    <property type="entry name" value="Catalase"/>
</dbReference>
<dbReference type="InterPro" id="IPR024708">
    <property type="entry name" value="Catalase_AS"/>
</dbReference>
<dbReference type="InterPro" id="IPR024712">
    <property type="entry name" value="Catalase_clade2"/>
</dbReference>
<dbReference type="InterPro" id="IPR043156">
    <property type="entry name" value="Catalase_clade2_helical"/>
</dbReference>
<dbReference type="InterPro" id="IPR011614">
    <property type="entry name" value="Catalase_core"/>
</dbReference>
<dbReference type="InterPro" id="IPR020835">
    <property type="entry name" value="Catalase_sf"/>
</dbReference>
<dbReference type="PANTHER" id="PTHR42821">
    <property type="entry name" value="CATALASE"/>
    <property type="match status" value="1"/>
</dbReference>
<dbReference type="PANTHER" id="PTHR42821:SF3">
    <property type="entry name" value="CATALASE B"/>
    <property type="match status" value="1"/>
</dbReference>
<dbReference type="Pfam" id="PF00199">
    <property type="entry name" value="Catalase"/>
    <property type="match status" value="1"/>
</dbReference>
<dbReference type="PRINTS" id="PR00067">
    <property type="entry name" value="CATALASE"/>
</dbReference>
<dbReference type="SMART" id="SM01060">
    <property type="entry name" value="Catalase"/>
    <property type="match status" value="1"/>
</dbReference>
<dbReference type="SUPFAM" id="SSF56634">
    <property type="entry name" value="Heme-dependent catalase-like"/>
    <property type="match status" value="1"/>
</dbReference>
<dbReference type="PROSITE" id="PS00438">
    <property type="entry name" value="CATALASE_2"/>
    <property type="match status" value="1"/>
</dbReference>
<dbReference type="PROSITE" id="PS51402">
    <property type="entry name" value="CATALASE_3"/>
    <property type="match status" value="1"/>
</dbReference>
<feature type="chain" id="PRO_0000084924" description="Catalase">
    <location>
        <begin position="1"/>
        <end position="670"/>
    </location>
</feature>
<feature type="active site">
    <location>
        <position position="61"/>
    </location>
</feature>
<feature type="active site">
    <location>
        <position position="132"/>
    </location>
</feature>
<feature type="binding site" description="axial binding residue" evidence="4">
    <location>
        <position position="345"/>
    </location>
    <ligand>
        <name>heme</name>
        <dbReference type="ChEBI" id="CHEBI:30413"/>
    </ligand>
    <ligandPart>
        <name>Fe</name>
        <dbReference type="ChEBI" id="CHEBI:18248"/>
    </ligandPart>
</feature>
<accession>P11934</accession>
<comment type="function">
    <text evidence="1">Catalyzes the degradation of hydrogen peroxide (H(2)O(2)) generated by peroxisomal oxidases to water and oxygen, thereby protecting cells from the toxic effects of hydrogen peroxide.</text>
</comment>
<comment type="catalytic activity">
    <reaction evidence="3">
        <text>2 H2O2 = O2 + 2 H2O</text>
        <dbReference type="Rhea" id="RHEA:20309"/>
        <dbReference type="ChEBI" id="CHEBI:15377"/>
        <dbReference type="ChEBI" id="CHEBI:15379"/>
        <dbReference type="ChEBI" id="CHEBI:16240"/>
        <dbReference type="EC" id="1.11.1.6"/>
    </reaction>
</comment>
<comment type="cofactor">
    <cofactor evidence="2">
        <name>heme</name>
        <dbReference type="ChEBI" id="CHEBI:30413"/>
    </cofactor>
</comment>
<comment type="subunit">
    <text>Homotetramer.</text>
</comment>
<comment type="subcellular location">
    <subcellularLocation>
        <location evidence="2">Peroxisome matrix</location>
    </subcellularLocation>
</comment>
<comment type="similarity">
    <text evidence="5">Belongs to the catalase family.</text>
</comment>
<comment type="caution">
    <text evidence="5">This is an X-ray determined sequence, alanine is indicated in position where no side chain could be observed.</text>
</comment>
<protein>
    <recommendedName>
        <fullName>Catalase</fullName>
        <ecNumber evidence="3">1.11.1.6</ecNumber>
    </recommendedName>
</protein>
<keyword id="KW-0002">3D-structure</keyword>
<keyword id="KW-0903">Direct protein sequencing</keyword>
<keyword id="KW-0349">Heme</keyword>
<keyword id="KW-0376">Hydrogen peroxide</keyword>
<keyword id="KW-0408">Iron</keyword>
<keyword id="KW-0479">Metal-binding</keyword>
<keyword id="KW-0560">Oxidoreductase</keyword>
<keyword id="KW-0575">Peroxidase</keyword>
<keyword id="KW-0576">Peroxisome</keyword>
<reference key="1">
    <citation type="journal article" date="1986" name="J. Mol. Biol.">
        <title>Three-dimensional structure of catalase from Penicillium vitale at 2.0-A resolution.</title>
        <authorList>
            <person name="Vainshtein B.K."/>
            <person name="Melik-Adamyan W.R."/>
            <person name="Barynin V.V."/>
            <person name="Vagin A.A."/>
            <person name="Grebenko A.I."/>
            <person name="Borisov V.V."/>
            <person name="Bartels K.S."/>
            <person name="Fita I."/>
            <person name="Rossmann M.G."/>
        </authorList>
    </citation>
    <scope>PROTEIN SEQUENCE</scope>
    <scope>X-RAY CRYSTALLOGRAPHY (2 ANGSTROMS)</scope>
</reference>
<reference key="2">
    <citation type="journal article" date="1986" name="J. Mol. Biol.">
        <title>Comparison of beef liver and Penicillium vitale catalases.</title>
        <authorList>
            <person name="Melik-Adamyan W.R."/>
            <person name="Barynin V.V."/>
            <person name="Vagin A.A."/>
            <person name="Borisov V.V."/>
            <person name="Vainshtein B.K."/>
            <person name="Fita I."/>
            <person name="Murthy M.R.N."/>
            <person name="Rossmann M.G."/>
        </authorList>
    </citation>
    <scope>SIMILARITY TO BOVINE CATALASE</scope>
</reference>